<proteinExistence type="inferred from homology"/>
<sequence length="323" mass="36842">MPLPAAAFARILVVSRQRLFNTRIIHTSGSGYSITQCRFYKTTPCLTHKQSQILDLDAPKSRENREKDGGKSKKSKKSIKWSTGSVLMLTIPVFAFSLGIWQTFRLKWKLDLIEHLKGRLNQTAQELPEDLSCESLEPLEYCRVTVTGEFLHEKEFIISPRGRFDPGKKTSAAAGSMLSENEMSSHGGHLITPFRLKNSGKIILINRGWLPSFYFDPETRQKTNPRGTLTLPAIVRKTEKRPQFVGQNVPEQGVWYYRDLNQMAKHYGTEPVLLDAAYETTVPGGPIGGQTNINVRNEHLNYLTTWFTLTLVTMLMWIHKFRK</sequence>
<reference key="1">
    <citation type="journal article" date="1998" name="Science">
        <title>Genome sequence of the nematode C. elegans: a platform for investigating biology.</title>
        <authorList>
            <consortium name="The C. elegans sequencing consortium"/>
        </authorList>
    </citation>
    <scope>NUCLEOTIDE SEQUENCE [LARGE SCALE GENOMIC DNA]</scope>
    <source>
        <strain>Bristol N2</strain>
    </source>
</reference>
<evidence type="ECO:0000250" key="1"/>
<evidence type="ECO:0000255" key="2"/>
<evidence type="ECO:0000256" key="3">
    <source>
        <dbReference type="SAM" id="MobiDB-lite"/>
    </source>
</evidence>
<evidence type="ECO:0000305" key="4"/>
<dbReference type="EMBL" id="FO081532">
    <property type="protein sequence ID" value="CCD72250.1"/>
    <property type="molecule type" value="Genomic_DNA"/>
</dbReference>
<dbReference type="RefSeq" id="NP_497657.1">
    <property type="nucleotide sequence ID" value="NM_065256.6"/>
</dbReference>
<dbReference type="SMR" id="Q9N5N8"/>
<dbReference type="FunCoup" id="Q9N5N8">
    <property type="interactions" value="1734"/>
</dbReference>
<dbReference type="STRING" id="6239.H06I04.2a.1"/>
<dbReference type="PaxDb" id="6239-H06I04.2"/>
<dbReference type="PeptideAtlas" id="Q9N5N8"/>
<dbReference type="EnsemblMetazoa" id="H06I04.2a.1">
    <property type="protein sequence ID" value="H06I04.2a.1"/>
    <property type="gene ID" value="WBGene00004787"/>
</dbReference>
<dbReference type="GeneID" id="175415"/>
<dbReference type="KEGG" id="cel:CELE_H06I04.2"/>
<dbReference type="UCSC" id="H06I04.2">
    <property type="organism name" value="c. elegans"/>
</dbReference>
<dbReference type="AGR" id="WB:WBGene00004787"/>
<dbReference type="CTD" id="175415"/>
<dbReference type="WormBase" id="H06I04.2a">
    <property type="protein sequence ID" value="CE23794"/>
    <property type="gene ID" value="WBGene00004787"/>
    <property type="gene designation" value="sft-1"/>
</dbReference>
<dbReference type="eggNOG" id="KOG1563">
    <property type="taxonomic scope" value="Eukaryota"/>
</dbReference>
<dbReference type="GeneTree" id="ENSGT00530000064194"/>
<dbReference type="HOGENOM" id="CLU_047737_4_0_1"/>
<dbReference type="InParanoid" id="Q9N5N8"/>
<dbReference type="OMA" id="WYSRDVA"/>
<dbReference type="OrthoDB" id="10040024at2759"/>
<dbReference type="PhylomeDB" id="Q9N5N8"/>
<dbReference type="Reactome" id="R-CEL-9864848">
    <property type="pathway name" value="Complex IV assembly"/>
</dbReference>
<dbReference type="PRO" id="PR:Q9N5N8"/>
<dbReference type="Proteomes" id="UP000001940">
    <property type="component" value="Chromosome III"/>
</dbReference>
<dbReference type="Bgee" id="WBGene00004787">
    <property type="expression patterns" value="Expressed in germ line (C elegans) and 4 other cell types or tissues"/>
</dbReference>
<dbReference type="ExpressionAtlas" id="Q9N5N8">
    <property type="expression patterns" value="baseline and differential"/>
</dbReference>
<dbReference type="GO" id="GO:0005743">
    <property type="term" value="C:mitochondrial inner membrane"/>
    <property type="evidence" value="ECO:0007669"/>
    <property type="project" value="UniProtKB-SubCell"/>
</dbReference>
<dbReference type="GO" id="GO:0005739">
    <property type="term" value="C:mitochondrion"/>
    <property type="evidence" value="ECO:0000318"/>
    <property type="project" value="GO_Central"/>
</dbReference>
<dbReference type="GO" id="GO:0033617">
    <property type="term" value="P:mitochondrial cytochrome c oxidase assembly"/>
    <property type="evidence" value="ECO:0000318"/>
    <property type="project" value="GO_Central"/>
</dbReference>
<dbReference type="CDD" id="cd06662">
    <property type="entry name" value="SURF1"/>
    <property type="match status" value="1"/>
</dbReference>
<dbReference type="InterPro" id="IPR002994">
    <property type="entry name" value="Surf1/Shy1"/>
</dbReference>
<dbReference type="InterPro" id="IPR045214">
    <property type="entry name" value="Surf1/Surf4"/>
</dbReference>
<dbReference type="PANTHER" id="PTHR23427">
    <property type="entry name" value="SURFEIT LOCUS PROTEIN"/>
    <property type="match status" value="1"/>
</dbReference>
<dbReference type="PANTHER" id="PTHR23427:SF2">
    <property type="entry name" value="SURFEIT LOCUS PROTEIN 1"/>
    <property type="match status" value="1"/>
</dbReference>
<dbReference type="Pfam" id="PF02104">
    <property type="entry name" value="SURF1"/>
    <property type="match status" value="1"/>
</dbReference>
<dbReference type="PROSITE" id="PS50895">
    <property type="entry name" value="SURF1"/>
    <property type="match status" value="1"/>
</dbReference>
<comment type="function">
    <text evidence="1">Probably involved in the biogenesis of the COX complex.</text>
</comment>
<comment type="subcellular location">
    <subcellularLocation>
        <location evidence="1">Mitochondrion inner membrane</location>
        <topology evidence="1">Multi-pass membrane protein</topology>
    </subcellularLocation>
</comment>
<comment type="similarity">
    <text evidence="4">Belongs to the SURF1 family.</text>
</comment>
<keyword id="KW-0472">Membrane</keyword>
<keyword id="KW-0496">Mitochondrion</keyword>
<keyword id="KW-0999">Mitochondrion inner membrane</keyword>
<keyword id="KW-1185">Reference proteome</keyword>
<keyword id="KW-0812">Transmembrane</keyword>
<keyword id="KW-1133">Transmembrane helix</keyword>
<organism>
    <name type="scientific">Caenorhabditis elegans</name>
    <dbReference type="NCBI Taxonomy" id="6239"/>
    <lineage>
        <taxon>Eukaryota</taxon>
        <taxon>Metazoa</taxon>
        <taxon>Ecdysozoa</taxon>
        <taxon>Nematoda</taxon>
        <taxon>Chromadorea</taxon>
        <taxon>Rhabditida</taxon>
        <taxon>Rhabditina</taxon>
        <taxon>Rhabditomorpha</taxon>
        <taxon>Rhabditoidea</taxon>
        <taxon>Rhabditidae</taxon>
        <taxon>Peloderinae</taxon>
        <taxon>Caenorhabditis</taxon>
    </lineage>
</organism>
<protein>
    <recommendedName>
        <fullName>SURF1-like protein</fullName>
    </recommendedName>
</protein>
<accession>Q9N5N8</accession>
<name>SURF1_CAEEL</name>
<gene>
    <name type="primary">sft-1</name>
    <name type="ORF">H06I04.2</name>
</gene>
<feature type="chain" id="PRO_0000344499" description="SURF1-like protein">
    <location>
        <begin position="1"/>
        <end position="323"/>
    </location>
</feature>
<feature type="transmembrane region" description="Helical" evidence="2">
    <location>
        <begin position="81"/>
        <end position="101"/>
    </location>
</feature>
<feature type="transmembrane region" description="Helical" evidence="2">
    <location>
        <begin position="299"/>
        <end position="319"/>
    </location>
</feature>
<feature type="region of interest" description="Disordered" evidence="3">
    <location>
        <begin position="57"/>
        <end position="76"/>
    </location>
</feature>
<feature type="compositionally biased region" description="Basic and acidic residues" evidence="3">
    <location>
        <begin position="57"/>
        <end position="71"/>
    </location>
</feature>